<reference key="1">
    <citation type="journal article" date="2007" name="J. Bacteriol.">
        <title>Molecular characterization of membrane-associated soluble serine palmitoyltransferases from Sphingobacterium multivorum and Bdellovibrio stolpii.</title>
        <authorList>
            <person name="Ikushiro H."/>
            <person name="Islam M.M."/>
            <person name="Tojo H."/>
            <person name="Hayashi H."/>
        </authorList>
    </citation>
    <scope>NUCLEOTIDE SEQUENCE [GENOMIC DNA]</scope>
    <scope>FUNCTION</scope>
    <scope>CATALYTIC ACTIVITY</scope>
    <scope>COFACTOR</scope>
    <scope>ACTIVITY REGULATION</scope>
    <scope>BIOPHYSICOCHEMICAL PROPERTIES</scope>
    <scope>SUBUNIT</scope>
    <scope>SUBCELLULAR LOCATION</scope>
    <source>
        <strain>ATCC 27052</strain>
    </source>
</reference>
<protein>
    <recommendedName>
        <fullName evidence="4">Serine palmitoyltransferase</fullName>
        <shortName evidence="4">SPT</shortName>
        <ecNumber evidence="3">2.3.1.50</ecNumber>
    </recommendedName>
</protein>
<proteinExistence type="evidence at protein level"/>
<evidence type="ECO:0000250" key="1">
    <source>
        <dbReference type="UniProtKB" id="Q93UV0"/>
    </source>
</evidence>
<evidence type="ECO:0000256" key="2">
    <source>
        <dbReference type="SAM" id="MobiDB-lite"/>
    </source>
</evidence>
<evidence type="ECO:0000269" key="3">
    <source>
    </source>
</evidence>
<evidence type="ECO:0000303" key="4">
    <source>
    </source>
</evidence>
<evidence type="ECO:0000305" key="5"/>
<evidence type="ECO:0000305" key="6">
    <source>
    </source>
</evidence>
<accession>A7BFV8</accession>
<gene>
    <name evidence="4" type="primary">spt</name>
</gene>
<feature type="chain" id="PRO_0000456077" description="Serine palmitoyltransferase">
    <location>
        <begin position="1"/>
        <end position="420"/>
    </location>
</feature>
<feature type="region of interest" description="Disordered" evidence="2">
    <location>
        <begin position="1"/>
        <end position="25"/>
    </location>
</feature>
<feature type="compositionally biased region" description="Polar residues" evidence="2">
    <location>
        <begin position="1"/>
        <end position="21"/>
    </location>
</feature>
<feature type="binding site" evidence="1">
    <location>
        <begin position="132"/>
        <end position="133"/>
    </location>
    <ligand>
        <name>pyridoxal 5'-phosphate</name>
        <dbReference type="ChEBI" id="CHEBI:597326"/>
    </ligand>
</feature>
<feature type="binding site" evidence="1">
    <location>
        <position position="233"/>
    </location>
    <ligand>
        <name>pyridoxal 5'-phosphate</name>
        <dbReference type="ChEBI" id="CHEBI:597326"/>
    </ligand>
</feature>
<feature type="binding site" evidence="1">
    <location>
        <position position="261"/>
    </location>
    <ligand>
        <name>pyridoxal 5'-phosphate</name>
        <dbReference type="ChEBI" id="CHEBI:597326"/>
    </ligand>
</feature>
<feature type="binding site" evidence="1">
    <location>
        <position position="263"/>
    </location>
    <ligand>
        <name>pyridoxal 5'-phosphate</name>
        <dbReference type="ChEBI" id="CHEBI:597326"/>
    </ligand>
</feature>
<feature type="modified residue" description="N6-(pyridoxal phosphate)lysine" evidence="1">
    <location>
        <position position="264"/>
    </location>
</feature>
<organism>
    <name type="scientific">Bacteriovorax stolpii</name>
    <name type="common">Bdellovibrio stolpii</name>
    <dbReference type="NCBI Taxonomy" id="960"/>
    <lineage>
        <taxon>Bacteria</taxon>
        <taxon>Pseudomonadati</taxon>
        <taxon>Bdellovibrionota</taxon>
        <taxon>Bacteriovoracia</taxon>
        <taxon>Bacteriovoracales</taxon>
        <taxon>Bacteriovoracaceae</taxon>
        <taxon>Bacteriovorax</taxon>
    </lineage>
</organism>
<name>SPT_BACTC</name>
<comment type="function">
    <text evidence="3">Catalyzes the condensation of L-serine with palmitoyl-CoA (hexadecanoyl-CoA) to produce 3-oxosphinganine.</text>
</comment>
<comment type="catalytic activity">
    <reaction evidence="3">
        <text>L-serine + hexadecanoyl-CoA + H(+) = 3-oxosphinganine + CO2 + CoA</text>
        <dbReference type="Rhea" id="RHEA:14761"/>
        <dbReference type="ChEBI" id="CHEBI:15378"/>
        <dbReference type="ChEBI" id="CHEBI:16526"/>
        <dbReference type="ChEBI" id="CHEBI:33384"/>
        <dbReference type="ChEBI" id="CHEBI:57287"/>
        <dbReference type="ChEBI" id="CHEBI:57379"/>
        <dbReference type="ChEBI" id="CHEBI:58299"/>
        <dbReference type="EC" id="2.3.1.50"/>
    </reaction>
    <physiologicalReaction direction="left-to-right" evidence="3">
        <dbReference type="Rhea" id="RHEA:14762"/>
    </physiologicalReaction>
</comment>
<comment type="cofactor">
    <cofactor evidence="3">
        <name>pyridoxal 5'-phosphate</name>
        <dbReference type="ChEBI" id="CHEBI:597326"/>
    </cofactor>
</comment>
<comment type="activity regulation">
    <text evidence="3">Significantly inhibited by palmitoyl-CoA concentrations greater than 100 uM.</text>
</comment>
<comment type="biophysicochemical properties">
    <kinetics>
        <KM evidence="3">3.7 mM for L-serine</KM>
        <text evidence="3">kcat is 0.03 sec(-1) (in the presence of 100 uM of palmitoyl-CoA).</text>
    </kinetics>
    <phDependence>
        <text evidence="3">Optimum pH is 7.0 to 8.0.</text>
    </phDependence>
</comment>
<comment type="pathway">
    <text evidence="6">Lipid metabolism; sphingolipid metabolism.</text>
</comment>
<comment type="subunit">
    <text evidence="3">Homodimer.</text>
</comment>
<comment type="subcellular location">
    <subcellularLocation>
        <location evidence="3">Cytoplasm</location>
    </subcellularLocation>
    <subcellularLocation>
        <location evidence="3">Cell inner membrane</location>
        <topology evidence="3">Peripheral membrane protein</topology>
    </subcellularLocation>
    <text evidence="3">Predominantly concentrated in a limited region near the inner membrane or organelle-like multilayered membrane structure.</text>
</comment>
<comment type="similarity">
    <text evidence="5">Belongs to the class-II pyridoxal-phosphate-dependent aminotransferase family.</text>
</comment>
<dbReference type="EC" id="2.3.1.50" evidence="3"/>
<dbReference type="EMBL" id="AB259216">
    <property type="protein sequence ID" value="BAF73753.1"/>
    <property type="molecule type" value="Genomic_DNA"/>
</dbReference>
<dbReference type="RefSeq" id="WP_243733602.1">
    <property type="nucleotide sequence ID" value="NZ_CP025704.1"/>
</dbReference>
<dbReference type="SMR" id="A7BFV8"/>
<dbReference type="BRENDA" id="2.3.1.50">
    <property type="organism ID" value="800"/>
</dbReference>
<dbReference type="UniPathway" id="UPA00222"/>
<dbReference type="GO" id="GO:0005737">
    <property type="term" value="C:cytoplasm"/>
    <property type="evidence" value="ECO:0007669"/>
    <property type="project" value="UniProtKB-SubCell"/>
</dbReference>
<dbReference type="GO" id="GO:0005886">
    <property type="term" value="C:plasma membrane"/>
    <property type="evidence" value="ECO:0007669"/>
    <property type="project" value="UniProtKB-SubCell"/>
</dbReference>
<dbReference type="GO" id="GO:0030170">
    <property type="term" value="F:pyridoxal phosphate binding"/>
    <property type="evidence" value="ECO:0007669"/>
    <property type="project" value="InterPro"/>
</dbReference>
<dbReference type="GO" id="GO:0004758">
    <property type="term" value="F:serine C-palmitoyltransferase activity"/>
    <property type="evidence" value="ECO:0007669"/>
    <property type="project" value="UniProtKB-EC"/>
</dbReference>
<dbReference type="GO" id="GO:0009058">
    <property type="term" value="P:biosynthetic process"/>
    <property type="evidence" value="ECO:0007669"/>
    <property type="project" value="InterPro"/>
</dbReference>
<dbReference type="GO" id="GO:0006665">
    <property type="term" value="P:sphingolipid metabolic process"/>
    <property type="evidence" value="ECO:0007669"/>
    <property type="project" value="UniProtKB-UniPathway"/>
</dbReference>
<dbReference type="CDD" id="cd06454">
    <property type="entry name" value="KBL_like"/>
    <property type="match status" value="1"/>
</dbReference>
<dbReference type="Gene3D" id="3.90.1150.10">
    <property type="entry name" value="Aspartate Aminotransferase, domain 1"/>
    <property type="match status" value="1"/>
</dbReference>
<dbReference type="Gene3D" id="3.40.640.10">
    <property type="entry name" value="Type I PLP-dependent aspartate aminotransferase-like (Major domain)"/>
    <property type="match status" value="1"/>
</dbReference>
<dbReference type="InterPro" id="IPR001917">
    <property type="entry name" value="Aminotrans_II_pyridoxalP_BS"/>
</dbReference>
<dbReference type="InterPro" id="IPR004839">
    <property type="entry name" value="Aminotransferase_I/II_large"/>
</dbReference>
<dbReference type="InterPro" id="IPR050087">
    <property type="entry name" value="AON_synthase_class-II"/>
</dbReference>
<dbReference type="InterPro" id="IPR015424">
    <property type="entry name" value="PyrdxlP-dep_Trfase"/>
</dbReference>
<dbReference type="InterPro" id="IPR015421">
    <property type="entry name" value="PyrdxlP-dep_Trfase_major"/>
</dbReference>
<dbReference type="InterPro" id="IPR015422">
    <property type="entry name" value="PyrdxlP-dep_Trfase_small"/>
</dbReference>
<dbReference type="PANTHER" id="PTHR13693">
    <property type="entry name" value="CLASS II AMINOTRANSFERASE/8-AMINO-7-OXONONANOATE SYNTHASE"/>
    <property type="match status" value="1"/>
</dbReference>
<dbReference type="PANTHER" id="PTHR13693:SF3">
    <property type="entry name" value="LD36009P"/>
    <property type="match status" value="1"/>
</dbReference>
<dbReference type="Pfam" id="PF00155">
    <property type="entry name" value="Aminotran_1_2"/>
    <property type="match status" value="1"/>
</dbReference>
<dbReference type="SUPFAM" id="SSF53383">
    <property type="entry name" value="PLP-dependent transferases"/>
    <property type="match status" value="1"/>
</dbReference>
<dbReference type="PROSITE" id="PS00599">
    <property type="entry name" value="AA_TRANSFER_CLASS_2"/>
    <property type="match status" value="1"/>
</dbReference>
<keyword id="KW-0012">Acyltransferase</keyword>
<keyword id="KW-0997">Cell inner membrane</keyword>
<keyword id="KW-1003">Cell membrane</keyword>
<keyword id="KW-0963">Cytoplasm</keyword>
<keyword id="KW-0443">Lipid metabolism</keyword>
<keyword id="KW-0472">Membrane</keyword>
<keyword id="KW-0663">Pyridoxal phosphate</keyword>
<keyword id="KW-0808">Transferase</keyword>
<sequence>MKHNLQDNLQGEQMANTNSNGGKKPFSDAKIIERANLLRDNDLYFFFRAIEETEASTVTVKGKKQIMIGSNNYLGLTHHPAVKEAAIKAVEKYGTGCTGSRFLNGNLNIHEELDEKLAAYLGHEKAIVFSTGMQANLGALSAICGPKDLMLFDSENHASIIDASRLSLGTTFKYKHNDMASLEELLESNMSRFNRVIIVADGVFSMTGDILRLPEVVKLAKKYGAYVYVDDAHGLGVMGPQGRGTMAHFDVTKDVDFNMGTFSKSFASIGGVISGSKDAIDYVRHSARSFMFSASMPPAAVATVSACIDVVQNDETILNNLWSNVEFMRNGFKELGFFTYGSQTPIIPLFIGDDMKALKMTKWLESKGVFCTPVLPPAVPKGETLIRTSYMASHNREDLSTVLEVFAEAKKIFDIPNHLH</sequence>